<comment type="function">
    <text evidence="1">One of the primary rRNA binding proteins, it binds specifically to the 5'-end of 16S ribosomal RNA.</text>
</comment>
<comment type="subunit">
    <text evidence="1">Part of the 30S ribosomal subunit.</text>
</comment>
<comment type="similarity">
    <text evidence="1">Belongs to the universal ribosomal protein uS17 family.</text>
</comment>
<keyword id="KW-0687">Ribonucleoprotein</keyword>
<keyword id="KW-0689">Ribosomal protein</keyword>
<keyword id="KW-0694">RNA-binding</keyword>
<keyword id="KW-0699">rRNA-binding</keyword>
<feature type="chain" id="PRO_1000143281" description="Small ribosomal subunit protein uS17">
    <location>
        <begin position="1"/>
        <end position="110"/>
    </location>
</feature>
<sequence>MSKKIITGKVVSNAMDKTITVETDRLTKHPKYHKFVRKTRRYHAHDENNECEIGDIVEIEESRKLSKTKAFVLKRIVRKNILSEEVETPDSVEEELKEAFGGEVDGTTRE</sequence>
<name>RS17_PETMO</name>
<gene>
    <name evidence="1" type="primary">rpsQ</name>
    <name type="ordered locus">Pmob_0781</name>
</gene>
<reference key="1">
    <citation type="submission" date="2007-11" db="EMBL/GenBank/DDBJ databases">
        <title>Complete sequence of Petroga mobilis SJ95.</title>
        <authorList>
            <consortium name="US DOE Joint Genome Institute"/>
            <person name="Copeland A."/>
            <person name="Lucas S."/>
            <person name="Lapidus A."/>
            <person name="Barry K."/>
            <person name="Glavina del Rio T."/>
            <person name="Dalin E."/>
            <person name="Tice H."/>
            <person name="Pitluck S."/>
            <person name="Meincke L."/>
            <person name="Brettin T."/>
            <person name="Bruce D."/>
            <person name="Detter J.C."/>
            <person name="Han C."/>
            <person name="Kuske C.R."/>
            <person name="Schmutz J."/>
            <person name="Larimer F."/>
            <person name="Land M."/>
            <person name="Hauser L."/>
            <person name="Kyrpides N."/>
            <person name="Mikhailova N."/>
            <person name="Noll K."/>
            <person name="Richardson P."/>
        </authorList>
    </citation>
    <scope>NUCLEOTIDE SEQUENCE [LARGE SCALE GENOMIC DNA]</scope>
    <source>
        <strain>DSM 10674 / SJ95</strain>
    </source>
</reference>
<accession>A9BH96</accession>
<dbReference type="EMBL" id="CP000879">
    <property type="protein sequence ID" value="ABX31505.1"/>
    <property type="molecule type" value="Genomic_DNA"/>
</dbReference>
<dbReference type="RefSeq" id="WP_012208608.1">
    <property type="nucleotide sequence ID" value="NC_010003.1"/>
</dbReference>
<dbReference type="SMR" id="A9BH96"/>
<dbReference type="STRING" id="403833.Pmob_0781"/>
<dbReference type="KEGG" id="pmo:Pmob_0781"/>
<dbReference type="eggNOG" id="COG0186">
    <property type="taxonomic scope" value="Bacteria"/>
</dbReference>
<dbReference type="HOGENOM" id="CLU_073626_1_2_0"/>
<dbReference type="OrthoDB" id="9811714at2"/>
<dbReference type="Proteomes" id="UP000000789">
    <property type="component" value="Chromosome"/>
</dbReference>
<dbReference type="GO" id="GO:0022627">
    <property type="term" value="C:cytosolic small ribosomal subunit"/>
    <property type="evidence" value="ECO:0007669"/>
    <property type="project" value="TreeGrafter"/>
</dbReference>
<dbReference type="GO" id="GO:0019843">
    <property type="term" value="F:rRNA binding"/>
    <property type="evidence" value="ECO:0007669"/>
    <property type="project" value="UniProtKB-UniRule"/>
</dbReference>
<dbReference type="GO" id="GO:0003735">
    <property type="term" value="F:structural constituent of ribosome"/>
    <property type="evidence" value="ECO:0007669"/>
    <property type="project" value="InterPro"/>
</dbReference>
<dbReference type="GO" id="GO:0006412">
    <property type="term" value="P:translation"/>
    <property type="evidence" value="ECO:0007669"/>
    <property type="project" value="UniProtKB-UniRule"/>
</dbReference>
<dbReference type="CDD" id="cd00364">
    <property type="entry name" value="Ribosomal_uS17"/>
    <property type="match status" value="1"/>
</dbReference>
<dbReference type="Gene3D" id="2.40.50.140">
    <property type="entry name" value="Nucleic acid-binding proteins"/>
    <property type="match status" value="1"/>
</dbReference>
<dbReference type="HAMAP" id="MF_01345_B">
    <property type="entry name" value="Ribosomal_uS17_B"/>
    <property type="match status" value="1"/>
</dbReference>
<dbReference type="InterPro" id="IPR012340">
    <property type="entry name" value="NA-bd_OB-fold"/>
</dbReference>
<dbReference type="InterPro" id="IPR000266">
    <property type="entry name" value="Ribosomal_uS17"/>
</dbReference>
<dbReference type="InterPro" id="IPR019984">
    <property type="entry name" value="Ribosomal_uS17_bact/chlr"/>
</dbReference>
<dbReference type="NCBIfam" id="NF004123">
    <property type="entry name" value="PRK05610.1"/>
    <property type="match status" value="1"/>
</dbReference>
<dbReference type="NCBIfam" id="TIGR03635">
    <property type="entry name" value="uS17_bact"/>
    <property type="match status" value="1"/>
</dbReference>
<dbReference type="PANTHER" id="PTHR10744">
    <property type="entry name" value="40S RIBOSOMAL PROTEIN S11 FAMILY MEMBER"/>
    <property type="match status" value="1"/>
</dbReference>
<dbReference type="PANTHER" id="PTHR10744:SF1">
    <property type="entry name" value="SMALL RIBOSOMAL SUBUNIT PROTEIN US17M"/>
    <property type="match status" value="1"/>
</dbReference>
<dbReference type="Pfam" id="PF00366">
    <property type="entry name" value="Ribosomal_S17"/>
    <property type="match status" value="1"/>
</dbReference>
<dbReference type="PRINTS" id="PR00973">
    <property type="entry name" value="RIBOSOMALS17"/>
</dbReference>
<dbReference type="SUPFAM" id="SSF50249">
    <property type="entry name" value="Nucleic acid-binding proteins"/>
    <property type="match status" value="1"/>
</dbReference>
<evidence type="ECO:0000255" key="1">
    <source>
        <dbReference type="HAMAP-Rule" id="MF_01345"/>
    </source>
</evidence>
<evidence type="ECO:0000305" key="2"/>
<proteinExistence type="inferred from homology"/>
<organism>
    <name type="scientific">Petrotoga mobilis (strain DSM 10674 / SJ95)</name>
    <dbReference type="NCBI Taxonomy" id="403833"/>
    <lineage>
        <taxon>Bacteria</taxon>
        <taxon>Thermotogati</taxon>
        <taxon>Thermotogota</taxon>
        <taxon>Thermotogae</taxon>
        <taxon>Petrotogales</taxon>
        <taxon>Petrotogaceae</taxon>
        <taxon>Petrotoga</taxon>
    </lineage>
</organism>
<protein>
    <recommendedName>
        <fullName evidence="1">Small ribosomal subunit protein uS17</fullName>
    </recommendedName>
    <alternativeName>
        <fullName evidence="2">30S ribosomal protein S17</fullName>
    </alternativeName>
</protein>